<protein>
    <recommendedName>
        <fullName evidence="1">Small ribosomal subunit protein uS2</fullName>
    </recommendedName>
    <alternativeName>
        <fullName evidence="2">30S ribosomal protein S2</fullName>
    </alternativeName>
</protein>
<organism>
    <name type="scientific">Pseudomonas syringae pv. tomato (strain ATCC BAA-871 / DC3000)</name>
    <dbReference type="NCBI Taxonomy" id="223283"/>
    <lineage>
        <taxon>Bacteria</taxon>
        <taxon>Pseudomonadati</taxon>
        <taxon>Pseudomonadota</taxon>
        <taxon>Gammaproteobacteria</taxon>
        <taxon>Pseudomonadales</taxon>
        <taxon>Pseudomonadaceae</taxon>
        <taxon>Pseudomonas</taxon>
    </lineage>
</organism>
<dbReference type="EMBL" id="AE016853">
    <property type="protein sequence ID" value="AAO55054.1"/>
    <property type="molecule type" value="Genomic_DNA"/>
</dbReference>
<dbReference type="RefSeq" id="NP_791359.1">
    <property type="nucleotide sequence ID" value="NC_004578.1"/>
</dbReference>
<dbReference type="RefSeq" id="WP_005615972.1">
    <property type="nucleotide sequence ID" value="NC_004578.1"/>
</dbReference>
<dbReference type="SMR" id="Q886P3"/>
<dbReference type="STRING" id="223283.PSPTO_1534"/>
<dbReference type="GeneID" id="61791902"/>
<dbReference type="KEGG" id="pst:PSPTO_1534"/>
<dbReference type="PATRIC" id="fig|223283.9.peg.1560"/>
<dbReference type="eggNOG" id="COG0052">
    <property type="taxonomic scope" value="Bacteria"/>
</dbReference>
<dbReference type="HOGENOM" id="CLU_040318_1_2_6"/>
<dbReference type="OrthoDB" id="9808036at2"/>
<dbReference type="PhylomeDB" id="Q886P3"/>
<dbReference type="Proteomes" id="UP000002515">
    <property type="component" value="Chromosome"/>
</dbReference>
<dbReference type="GO" id="GO:0022627">
    <property type="term" value="C:cytosolic small ribosomal subunit"/>
    <property type="evidence" value="ECO:0007669"/>
    <property type="project" value="TreeGrafter"/>
</dbReference>
<dbReference type="GO" id="GO:0003735">
    <property type="term" value="F:structural constituent of ribosome"/>
    <property type="evidence" value="ECO:0007669"/>
    <property type="project" value="InterPro"/>
</dbReference>
<dbReference type="GO" id="GO:0006412">
    <property type="term" value="P:translation"/>
    <property type="evidence" value="ECO:0007669"/>
    <property type="project" value="UniProtKB-UniRule"/>
</dbReference>
<dbReference type="CDD" id="cd01425">
    <property type="entry name" value="RPS2"/>
    <property type="match status" value="1"/>
</dbReference>
<dbReference type="FunFam" id="1.10.287.610:FF:000001">
    <property type="entry name" value="30S ribosomal protein S2"/>
    <property type="match status" value="1"/>
</dbReference>
<dbReference type="Gene3D" id="3.40.50.10490">
    <property type="entry name" value="Glucose-6-phosphate isomerase like protein, domain 1"/>
    <property type="match status" value="1"/>
</dbReference>
<dbReference type="Gene3D" id="1.10.287.610">
    <property type="entry name" value="Helix hairpin bin"/>
    <property type="match status" value="1"/>
</dbReference>
<dbReference type="HAMAP" id="MF_00291_B">
    <property type="entry name" value="Ribosomal_uS2_B"/>
    <property type="match status" value="1"/>
</dbReference>
<dbReference type="InterPro" id="IPR001865">
    <property type="entry name" value="Ribosomal_uS2"/>
</dbReference>
<dbReference type="InterPro" id="IPR005706">
    <property type="entry name" value="Ribosomal_uS2_bac/mit/plastid"/>
</dbReference>
<dbReference type="InterPro" id="IPR018130">
    <property type="entry name" value="Ribosomal_uS2_CS"/>
</dbReference>
<dbReference type="InterPro" id="IPR023591">
    <property type="entry name" value="Ribosomal_uS2_flav_dom_sf"/>
</dbReference>
<dbReference type="NCBIfam" id="TIGR01011">
    <property type="entry name" value="rpsB_bact"/>
    <property type="match status" value="1"/>
</dbReference>
<dbReference type="PANTHER" id="PTHR12534">
    <property type="entry name" value="30S RIBOSOMAL PROTEIN S2 PROKARYOTIC AND ORGANELLAR"/>
    <property type="match status" value="1"/>
</dbReference>
<dbReference type="PANTHER" id="PTHR12534:SF0">
    <property type="entry name" value="SMALL RIBOSOMAL SUBUNIT PROTEIN US2M"/>
    <property type="match status" value="1"/>
</dbReference>
<dbReference type="Pfam" id="PF00318">
    <property type="entry name" value="Ribosomal_S2"/>
    <property type="match status" value="1"/>
</dbReference>
<dbReference type="PRINTS" id="PR00395">
    <property type="entry name" value="RIBOSOMALS2"/>
</dbReference>
<dbReference type="SUPFAM" id="SSF52313">
    <property type="entry name" value="Ribosomal protein S2"/>
    <property type="match status" value="1"/>
</dbReference>
<dbReference type="PROSITE" id="PS00962">
    <property type="entry name" value="RIBOSOMAL_S2_1"/>
    <property type="match status" value="1"/>
</dbReference>
<dbReference type="PROSITE" id="PS00963">
    <property type="entry name" value="RIBOSOMAL_S2_2"/>
    <property type="match status" value="1"/>
</dbReference>
<evidence type="ECO:0000255" key="1">
    <source>
        <dbReference type="HAMAP-Rule" id="MF_00291"/>
    </source>
</evidence>
<evidence type="ECO:0000305" key="2"/>
<gene>
    <name evidence="1" type="primary">rpsB</name>
    <name type="ordered locus">PSPTO_1534</name>
</gene>
<sequence length="247" mass="27201">MSQVNMRDMLKAGVHFGHQTRYWNPKMGKYIFGARNKIHIINLEKTLPMFNEALTFVERLASGKNKILFVGTKRSAGKIVAEEAARCGSPYVDHRWLGGMLTNFKTIRQSIKRLRELEVQAEDGTFAKLTKKEALMRTRDLEKLDRSLGGIKDMGGLPDALFVIDVDHERIAITEANKLGIPVIGVVDTNSSPEGVDYIIPGNDDAIRAIQLYMGSMADAVIRGRNNVAGGTDVFVEEAPAAAAVEG</sequence>
<comment type="similarity">
    <text evidence="1">Belongs to the universal ribosomal protein uS2 family.</text>
</comment>
<keyword id="KW-1185">Reference proteome</keyword>
<keyword id="KW-0687">Ribonucleoprotein</keyword>
<keyword id="KW-0689">Ribosomal protein</keyword>
<proteinExistence type="inferred from homology"/>
<accession>Q886P3</accession>
<reference key="1">
    <citation type="journal article" date="2003" name="Proc. Natl. Acad. Sci. U.S.A.">
        <title>The complete genome sequence of the Arabidopsis and tomato pathogen Pseudomonas syringae pv. tomato DC3000.</title>
        <authorList>
            <person name="Buell C.R."/>
            <person name="Joardar V."/>
            <person name="Lindeberg M."/>
            <person name="Selengut J."/>
            <person name="Paulsen I.T."/>
            <person name="Gwinn M.L."/>
            <person name="Dodson R.J."/>
            <person name="DeBoy R.T."/>
            <person name="Durkin A.S."/>
            <person name="Kolonay J.F."/>
            <person name="Madupu R."/>
            <person name="Daugherty S.C."/>
            <person name="Brinkac L.M."/>
            <person name="Beanan M.J."/>
            <person name="Haft D.H."/>
            <person name="Nelson W.C."/>
            <person name="Davidsen T.M."/>
            <person name="Zafar N."/>
            <person name="Zhou L."/>
            <person name="Liu J."/>
            <person name="Yuan Q."/>
            <person name="Khouri H.M."/>
            <person name="Fedorova N.B."/>
            <person name="Tran B."/>
            <person name="Russell D."/>
            <person name="Berry K.J."/>
            <person name="Utterback T.R."/>
            <person name="Van Aken S.E."/>
            <person name="Feldblyum T.V."/>
            <person name="D'Ascenzo M."/>
            <person name="Deng W.-L."/>
            <person name="Ramos A.R."/>
            <person name="Alfano J.R."/>
            <person name="Cartinhour S."/>
            <person name="Chatterjee A.K."/>
            <person name="Delaney T.P."/>
            <person name="Lazarowitz S.G."/>
            <person name="Martin G.B."/>
            <person name="Schneider D.J."/>
            <person name="Tang X."/>
            <person name="Bender C.L."/>
            <person name="White O."/>
            <person name="Fraser C.M."/>
            <person name="Collmer A."/>
        </authorList>
    </citation>
    <scope>NUCLEOTIDE SEQUENCE [LARGE SCALE GENOMIC DNA]</scope>
    <source>
        <strain>ATCC BAA-871 / DC3000</strain>
    </source>
</reference>
<name>RS2_PSESM</name>
<feature type="chain" id="PRO_0000134222" description="Small ribosomal subunit protein uS2">
    <location>
        <begin position="1"/>
        <end position="247"/>
    </location>
</feature>